<gene>
    <name evidence="1" type="primary">gltX</name>
    <name type="ordered locus">Bphy_1377</name>
</gene>
<comment type="function">
    <text evidence="1">Catalyzes the attachment of glutamate to tRNA(Glu) in a two-step reaction: glutamate is first activated by ATP to form Glu-AMP and then transferred to the acceptor end of tRNA(Glu).</text>
</comment>
<comment type="catalytic activity">
    <reaction evidence="1">
        <text>tRNA(Glu) + L-glutamate + ATP = L-glutamyl-tRNA(Glu) + AMP + diphosphate</text>
        <dbReference type="Rhea" id="RHEA:23540"/>
        <dbReference type="Rhea" id="RHEA-COMP:9663"/>
        <dbReference type="Rhea" id="RHEA-COMP:9680"/>
        <dbReference type="ChEBI" id="CHEBI:29985"/>
        <dbReference type="ChEBI" id="CHEBI:30616"/>
        <dbReference type="ChEBI" id="CHEBI:33019"/>
        <dbReference type="ChEBI" id="CHEBI:78442"/>
        <dbReference type="ChEBI" id="CHEBI:78520"/>
        <dbReference type="ChEBI" id="CHEBI:456215"/>
        <dbReference type="EC" id="6.1.1.17"/>
    </reaction>
</comment>
<comment type="subunit">
    <text evidence="1">Monomer.</text>
</comment>
<comment type="subcellular location">
    <subcellularLocation>
        <location evidence="1">Cytoplasm</location>
    </subcellularLocation>
</comment>
<comment type="similarity">
    <text evidence="1">Belongs to the class-I aminoacyl-tRNA synthetase family. Glutamate--tRNA ligase type 1 subfamily.</text>
</comment>
<keyword id="KW-0030">Aminoacyl-tRNA synthetase</keyword>
<keyword id="KW-0067">ATP-binding</keyword>
<keyword id="KW-0963">Cytoplasm</keyword>
<keyword id="KW-0436">Ligase</keyword>
<keyword id="KW-0547">Nucleotide-binding</keyword>
<keyword id="KW-0648">Protein biosynthesis</keyword>
<keyword id="KW-1185">Reference proteome</keyword>
<dbReference type="EC" id="6.1.1.17" evidence="1"/>
<dbReference type="EMBL" id="CP001043">
    <property type="protein sequence ID" value="ACC70559.1"/>
    <property type="molecule type" value="Genomic_DNA"/>
</dbReference>
<dbReference type="RefSeq" id="WP_012400773.1">
    <property type="nucleotide sequence ID" value="NC_010622.1"/>
</dbReference>
<dbReference type="SMR" id="B2JIQ8"/>
<dbReference type="STRING" id="391038.Bphy_1377"/>
<dbReference type="KEGG" id="bph:Bphy_1377"/>
<dbReference type="eggNOG" id="COG0008">
    <property type="taxonomic scope" value="Bacteria"/>
</dbReference>
<dbReference type="HOGENOM" id="CLU_015768_6_1_4"/>
<dbReference type="OrthoDB" id="9807503at2"/>
<dbReference type="Proteomes" id="UP000001192">
    <property type="component" value="Chromosome 1"/>
</dbReference>
<dbReference type="GO" id="GO:0005829">
    <property type="term" value="C:cytosol"/>
    <property type="evidence" value="ECO:0007669"/>
    <property type="project" value="TreeGrafter"/>
</dbReference>
<dbReference type="GO" id="GO:0005524">
    <property type="term" value="F:ATP binding"/>
    <property type="evidence" value="ECO:0007669"/>
    <property type="project" value="UniProtKB-UniRule"/>
</dbReference>
<dbReference type="GO" id="GO:0004818">
    <property type="term" value="F:glutamate-tRNA ligase activity"/>
    <property type="evidence" value="ECO:0007669"/>
    <property type="project" value="UniProtKB-UniRule"/>
</dbReference>
<dbReference type="GO" id="GO:0000049">
    <property type="term" value="F:tRNA binding"/>
    <property type="evidence" value="ECO:0007669"/>
    <property type="project" value="InterPro"/>
</dbReference>
<dbReference type="GO" id="GO:0008270">
    <property type="term" value="F:zinc ion binding"/>
    <property type="evidence" value="ECO:0007669"/>
    <property type="project" value="InterPro"/>
</dbReference>
<dbReference type="GO" id="GO:0006424">
    <property type="term" value="P:glutamyl-tRNA aminoacylation"/>
    <property type="evidence" value="ECO:0007669"/>
    <property type="project" value="UniProtKB-UniRule"/>
</dbReference>
<dbReference type="CDD" id="cd00808">
    <property type="entry name" value="GluRS_core"/>
    <property type="match status" value="1"/>
</dbReference>
<dbReference type="FunFam" id="3.40.50.620:FF:000007">
    <property type="entry name" value="Glutamate--tRNA ligase"/>
    <property type="match status" value="1"/>
</dbReference>
<dbReference type="Gene3D" id="1.10.10.350">
    <property type="match status" value="1"/>
</dbReference>
<dbReference type="Gene3D" id="1.10.8.70">
    <property type="entry name" value="Glutamate-tRNA synthetase, class I, anticodon-binding domain 1"/>
    <property type="match status" value="1"/>
</dbReference>
<dbReference type="Gene3D" id="3.40.50.620">
    <property type="entry name" value="HUPs"/>
    <property type="match status" value="1"/>
</dbReference>
<dbReference type="HAMAP" id="MF_00022">
    <property type="entry name" value="Glu_tRNA_synth_type1"/>
    <property type="match status" value="1"/>
</dbReference>
<dbReference type="InterPro" id="IPR045462">
    <property type="entry name" value="aa-tRNA-synth_I_cd-bd"/>
</dbReference>
<dbReference type="InterPro" id="IPR020751">
    <property type="entry name" value="aa-tRNA-synth_I_codon-bd_sub2"/>
</dbReference>
<dbReference type="InterPro" id="IPR001412">
    <property type="entry name" value="aa-tRNA-synth_I_CS"/>
</dbReference>
<dbReference type="InterPro" id="IPR008925">
    <property type="entry name" value="aa_tRNA-synth_I_cd-bd_sf"/>
</dbReference>
<dbReference type="InterPro" id="IPR004527">
    <property type="entry name" value="Glu-tRNA-ligase_bac/mito"/>
</dbReference>
<dbReference type="InterPro" id="IPR020752">
    <property type="entry name" value="Glu-tRNA-synth_I_codon-bd_sub1"/>
</dbReference>
<dbReference type="InterPro" id="IPR000924">
    <property type="entry name" value="Glu/Gln-tRNA-synth"/>
</dbReference>
<dbReference type="InterPro" id="IPR020058">
    <property type="entry name" value="Glu/Gln-tRNA-synth_Ib_cat-dom"/>
</dbReference>
<dbReference type="InterPro" id="IPR049940">
    <property type="entry name" value="GluQ/Sye"/>
</dbReference>
<dbReference type="InterPro" id="IPR033910">
    <property type="entry name" value="GluRS_core"/>
</dbReference>
<dbReference type="InterPro" id="IPR014729">
    <property type="entry name" value="Rossmann-like_a/b/a_fold"/>
</dbReference>
<dbReference type="NCBIfam" id="TIGR00464">
    <property type="entry name" value="gltX_bact"/>
    <property type="match status" value="1"/>
</dbReference>
<dbReference type="PANTHER" id="PTHR43311">
    <property type="entry name" value="GLUTAMATE--TRNA LIGASE"/>
    <property type="match status" value="1"/>
</dbReference>
<dbReference type="PANTHER" id="PTHR43311:SF2">
    <property type="entry name" value="GLUTAMATE--TRNA LIGASE, MITOCHONDRIAL-RELATED"/>
    <property type="match status" value="1"/>
</dbReference>
<dbReference type="Pfam" id="PF19269">
    <property type="entry name" value="Anticodon_2"/>
    <property type="match status" value="1"/>
</dbReference>
<dbReference type="Pfam" id="PF00749">
    <property type="entry name" value="tRNA-synt_1c"/>
    <property type="match status" value="1"/>
</dbReference>
<dbReference type="PRINTS" id="PR00987">
    <property type="entry name" value="TRNASYNTHGLU"/>
</dbReference>
<dbReference type="SUPFAM" id="SSF48163">
    <property type="entry name" value="An anticodon-binding domain of class I aminoacyl-tRNA synthetases"/>
    <property type="match status" value="1"/>
</dbReference>
<dbReference type="SUPFAM" id="SSF52374">
    <property type="entry name" value="Nucleotidylyl transferase"/>
    <property type="match status" value="1"/>
</dbReference>
<dbReference type="PROSITE" id="PS00178">
    <property type="entry name" value="AA_TRNA_LIGASE_I"/>
    <property type="match status" value="1"/>
</dbReference>
<sequence length="469" mass="52377">MTTPVRTRFAPSPTGFIHLGNIRSALYPWAFARKSKGVFVLRIEDTDVERSTEQSVDAILEGMQWLGLDYDEGPFYQMQRMDRYREVLKHMQEQGLVYPCYMSTEELDALRERQRASGEKPRYDGTWRPEPGKVLPTPPAGVQPVLRFRNPLTGVVAWDDAVKGRVEISNEELDDLVIARPDGTPTYNFCVVVDDLDMKITHVIRGDDHVNNTPRQINILRALGGEPPVYAHLPTVLNEQGEKMSKRHGAMSVMGYRDAGYLPEAVLNYLARLGWSHGDAEIFSREQLIEWFDLEHLGKSPAQYDHNKLNWLNNHYIKEADNARLADLSKPFFAALGIDEPTLAKGADLVSVIALMKDRASTVKEVVDNAAMFYREPNPDADALAQHVTDAVRPALADLAAALKACEWTKEGIAAALKATLGAHKLKMPQLAMPVRVLVAGTTHTPSIDSVLMLFGRDVVVSRIEKAVV</sequence>
<proteinExistence type="inferred from homology"/>
<protein>
    <recommendedName>
        <fullName evidence="1">Glutamate--tRNA ligase</fullName>
        <ecNumber evidence="1">6.1.1.17</ecNumber>
    </recommendedName>
    <alternativeName>
        <fullName evidence="1">Glutamyl-tRNA synthetase</fullName>
        <shortName evidence="1">GluRS</shortName>
    </alternativeName>
</protein>
<organism>
    <name type="scientific">Paraburkholderia phymatum (strain DSM 17167 / CIP 108236 / LMG 21445 / STM815)</name>
    <name type="common">Burkholderia phymatum</name>
    <dbReference type="NCBI Taxonomy" id="391038"/>
    <lineage>
        <taxon>Bacteria</taxon>
        <taxon>Pseudomonadati</taxon>
        <taxon>Pseudomonadota</taxon>
        <taxon>Betaproteobacteria</taxon>
        <taxon>Burkholderiales</taxon>
        <taxon>Burkholderiaceae</taxon>
        <taxon>Paraburkholderia</taxon>
    </lineage>
</organism>
<reference key="1">
    <citation type="journal article" date="2014" name="Stand. Genomic Sci.">
        <title>Complete genome sequence of Burkholderia phymatum STM815(T), a broad host range and efficient nitrogen-fixing symbiont of Mimosa species.</title>
        <authorList>
            <person name="Moulin L."/>
            <person name="Klonowska A."/>
            <person name="Caroline B."/>
            <person name="Booth K."/>
            <person name="Vriezen J.A."/>
            <person name="Melkonian R."/>
            <person name="James E.K."/>
            <person name="Young J.P."/>
            <person name="Bena G."/>
            <person name="Hauser L."/>
            <person name="Land M."/>
            <person name="Kyrpides N."/>
            <person name="Bruce D."/>
            <person name="Chain P."/>
            <person name="Copeland A."/>
            <person name="Pitluck S."/>
            <person name="Woyke T."/>
            <person name="Lizotte-Waniewski M."/>
            <person name="Bristow J."/>
            <person name="Riley M."/>
        </authorList>
    </citation>
    <scope>NUCLEOTIDE SEQUENCE [LARGE SCALE GENOMIC DNA]</scope>
    <source>
        <strain>DSM 17167 / CIP 108236 / LMG 21445 / STM815</strain>
    </source>
</reference>
<feature type="chain" id="PRO_1000090059" description="Glutamate--tRNA ligase">
    <location>
        <begin position="1"/>
        <end position="469"/>
    </location>
</feature>
<feature type="region of interest" description="Disordered" evidence="2">
    <location>
        <begin position="116"/>
        <end position="139"/>
    </location>
</feature>
<feature type="short sequence motif" description="'HIGH' region" evidence="1">
    <location>
        <begin position="11"/>
        <end position="21"/>
    </location>
</feature>
<feature type="short sequence motif" description="'KMSKS' region" evidence="1">
    <location>
        <begin position="243"/>
        <end position="247"/>
    </location>
</feature>
<feature type="compositionally biased region" description="Basic and acidic residues" evidence="2">
    <location>
        <begin position="116"/>
        <end position="131"/>
    </location>
</feature>
<feature type="binding site" evidence="1">
    <location>
        <position position="246"/>
    </location>
    <ligand>
        <name>ATP</name>
        <dbReference type="ChEBI" id="CHEBI:30616"/>
    </ligand>
</feature>
<accession>B2JIQ8</accession>
<name>SYE_PARP8</name>
<evidence type="ECO:0000255" key="1">
    <source>
        <dbReference type="HAMAP-Rule" id="MF_00022"/>
    </source>
</evidence>
<evidence type="ECO:0000256" key="2">
    <source>
        <dbReference type="SAM" id="MobiDB-lite"/>
    </source>
</evidence>